<accession>Q8HA43</accession>
<keyword id="KW-0929">Antimicrobial</keyword>
<keyword id="KW-0081">Bacteriolytic enzyme</keyword>
<keyword id="KW-0326">Glycosidase</keyword>
<keyword id="KW-0378">Hydrolase</keyword>
<keyword id="KW-0511">Multifunctional enzyme</keyword>
<keyword id="KW-0645">Protease</keyword>
<reference key="1">
    <citation type="journal article" date="2004" name="Microbiology">
        <title>The bifunctional peptidoglycan lysin of Streptococcus agalactiae bacteriophage B30.</title>
        <authorList>
            <person name="Pritchard D.G."/>
            <person name="Dong S."/>
            <person name="Baker J.R."/>
            <person name="Engler J.A."/>
        </authorList>
    </citation>
    <scope>NUCLEOTIDE SEQUENCE [GENOMIC DNA]</scope>
    <scope>ACTIVITY REGULATION</scope>
    <scope>BIOPHYSICOCHEMICAL PROPERTIES</scope>
    <scope>CATALYTIC ACTIVITY</scope>
    <scope>MUTAGENESIS OF CYS-26; CYS-34; CYS-44; HIS-91; ASP-158 AND GLU-185</scope>
    <scope>FUNCTION</scope>
    <scope>DOMAIN</scope>
</reference>
<reference key="2">
    <citation type="journal article" date="2006" name="Appl. Environ. Microbiol.">
        <title>Endopeptidase and glycosidase activities of the bacteriophage B30 lysin.</title>
        <authorList>
            <person name="Baker J.R."/>
            <person name="Liu C."/>
            <person name="Dong S."/>
            <person name="Pritchard D.G."/>
        </authorList>
    </citation>
    <scope>CATALYTIC ACTIVITY</scope>
    <scope>FUNCTION</scope>
</reference>
<reference key="3">
    <citation type="journal article" date="2006" name="Appl. Environ. Microbiol.">
        <title>The cell lysis activity of the Streptococcus agalactiae bacteriophage B30 endolysin relies on the cysteine, histidine-dependent amidohydrolase/peptidase domain.</title>
        <authorList>
            <person name="Donovan D.M."/>
            <person name="Foster-Frey J."/>
            <person name="Dong S."/>
            <person name="Rousseau G.M."/>
            <person name="Moineau S."/>
            <person name="Pritchard D.G."/>
        </authorList>
    </citation>
    <scope>DOMAIN</scope>
</reference>
<sequence>MATYQEYKSRSNGNAYDIDGSFGAQCWDGYADYCKYLGLPYANCTNTGYARDIWEQRHENGILNYFDEVEVMQAGDVAIFMVVDGVTPYSHVAIFDSDAGGGYGWFLGQNQGGANGAYNLVKIPYSATYPTAFRPKSFKNAVTVTDNTGLNKGDYFIDVSAYQQADLTTTCQQAGTTKTIIKVSESIAWLSDRHQQQANTSDPIGYYHFGRFGGDSALAQREADLFLSNLPSKKVSYLVIDYEDSASADKQANTNAVIAFMDKIASAGYKPIYYSYKPFTLNNIDYQKIIAKYPNSIWIAGYPDYEVRTEPLWEFFPSMDGVRWWQFTSVGVAGGLDKNIVLLADDSSKMDIPKVDKPQELTFYQKLATNTKLDNSNVPYYEATLSTDYYVESKPNASSADKEFIKAGTRVRVYEKVNGWSRINHPESAQWVEDNYLVNATDM</sequence>
<proteinExistence type="evidence at protein level"/>
<evidence type="ECO:0000255" key="1">
    <source>
        <dbReference type="PROSITE-ProRule" id="PRU00048"/>
    </source>
</evidence>
<evidence type="ECO:0000255" key="2">
    <source>
        <dbReference type="PROSITE-ProRule" id="PRU01117"/>
    </source>
</evidence>
<evidence type="ECO:0000269" key="3">
    <source>
    </source>
</evidence>
<evidence type="ECO:0000269" key="4">
    <source>
    </source>
</evidence>
<evidence type="ECO:0000269" key="5">
    <source>
    </source>
</evidence>
<evidence type="ECO:0000303" key="6">
    <source>
    </source>
</evidence>
<evidence type="ECO:0000305" key="7"/>
<evidence type="ECO:0000305" key="8">
    <source>
    </source>
</evidence>
<dbReference type="EC" id="3.4.22.-" evidence="3 5"/>
<dbReference type="EC" id="3.2.1.17" evidence="5"/>
<dbReference type="EMBL" id="AY149214">
    <property type="protein sequence ID" value="AAN28166.2"/>
    <property type="molecule type" value="Genomic_DNA"/>
</dbReference>
<dbReference type="SMR" id="Q8HA43"/>
<dbReference type="CAZy" id="GH25">
    <property type="family name" value="Glycoside Hydrolase Family 25"/>
</dbReference>
<dbReference type="GO" id="GO:0003796">
    <property type="term" value="F:lysozyme activity"/>
    <property type="evidence" value="ECO:0000314"/>
    <property type="project" value="UniProtKB"/>
</dbReference>
<dbReference type="GO" id="GO:0061785">
    <property type="term" value="F:peptidoglycan endopeptidase activity"/>
    <property type="evidence" value="ECO:0000314"/>
    <property type="project" value="UniProtKB"/>
</dbReference>
<dbReference type="GO" id="GO:0016052">
    <property type="term" value="P:carbohydrate catabolic process"/>
    <property type="evidence" value="ECO:0007669"/>
    <property type="project" value="TreeGrafter"/>
</dbReference>
<dbReference type="GO" id="GO:0016998">
    <property type="term" value="P:cell wall macromolecule catabolic process"/>
    <property type="evidence" value="ECO:0007669"/>
    <property type="project" value="InterPro"/>
</dbReference>
<dbReference type="GO" id="GO:0042742">
    <property type="term" value="P:defense response to bacterium"/>
    <property type="evidence" value="ECO:0007669"/>
    <property type="project" value="UniProtKB-KW"/>
</dbReference>
<dbReference type="GO" id="GO:0031640">
    <property type="term" value="P:killing of cells of another organism"/>
    <property type="evidence" value="ECO:0007669"/>
    <property type="project" value="UniProtKB-KW"/>
</dbReference>
<dbReference type="GO" id="GO:0009253">
    <property type="term" value="P:peptidoglycan catabolic process"/>
    <property type="evidence" value="ECO:0007669"/>
    <property type="project" value="InterPro"/>
</dbReference>
<dbReference type="GO" id="GO:0006508">
    <property type="term" value="P:proteolysis"/>
    <property type="evidence" value="ECO:0007669"/>
    <property type="project" value="UniProtKB-KW"/>
</dbReference>
<dbReference type="CDD" id="cd06415">
    <property type="entry name" value="GH25_Cpl1-like"/>
    <property type="match status" value="1"/>
</dbReference>
<dbReference type="FunFam" id="3.20.20.80:FF:000229">
    <property type="entry name" value="Lysozyme"/>
    <property type="match status" value="1"/>
</dbReference>
<dbReference type="FunFam" id="3.90.1720.10:FF:000026">
    <property type="entry name" value="N-acetylmuramoyl-L-alanine amidase"/>
    <property type="match status" value="1"/>
</dbReference>
<dbReference type="Gene3D" id="3.90.1720.10">
    <property type="entry name" value="endopeptidase domain like (from Nostoc punctiforme)"/>
    <property type="match status" value="1"/>
</dbReference>
<dbReference type="Gene3D" id="3.20.20.80">
    <property type="entry name" value="Glycosidases"/>
    <property type="match status" value="1"/>
</dbReference>
<dbReference type="InterPro" id="IPR007921">
    <property type="entry name" value="CHAP_dom"/>
</dbReference>
<dbReference type="InterPro" id="IPR002053">
    <property type="entry name" value="Glyco_hydro_25"/>
</dbReference>
<dbReference type="InterPro" id="IPR018077">
    <property type="entry name" value="Glyco_hydro_fam25_subgr"/>
</dbReference>
<dbReference type="InterPro" id="IPR017853">
    <property type="entry name" value="Glycoside_hydrolase_SF"/>
</dbReference>
<dbReference type="PANTHER" id="PTHR34135">
    <property type="entry name" value="LYSOZYME"/>
    <property type="match status" value="1"/>
</dbReference>
<dbReference type="PANTHER" id="PTHR34135:SF2">
    <property type="entry name" value="LYSOZYME"/>
    <property type="match status" value="1"/>
</dbReference>
<dbReference type="Pfam" id="PF01183">
    <property type="entry name" value="Glyco_hydro_25"/>
    <property type="match status" value="1"/>
</dbReference>
<dbReference type="SMART" id="SM00641">
    <property type="entry name" value="Glyco_25"/>
    <property type="match status" value="1"/>
</dbReference>
<dbReference type="SUPFAM" id="SSF51445">
    <property type="entry name" value="(Trans)glycosidases"/>
    <property type="match status" value="1"/>
</dbReference>
<dbReference type="PROSITE" id="PS50911">
    <property type="entry name" value="CHAP"/>
    <property type="match status" value="1"/>
</dbReference>
<dbReference type="PROSITE" id="PS51904">
    <property type="entry name" value="GLYCOSYL_HYDROL_F25_2"/>
    <property type="match status" value="1"/>
</dbReference>
<comment type="function">
    <text evidence="3 5">The endopeptidase activity cleaves the bacterial peptidoglycan between D-alanine and L-alanine (PubMed:15256551, PubMed:17021237). The N-acetyl-muramidase activity cleaves between N-acetylmuramic acid and N-acetylglucosamine bonds (PubMed:17021237).</text>
</comment>
<comment type="catalytic activity">
    <reaction evidence="5">
        <text>Hydrolysis of (1-&gt;4)-beta-linkages between N-acetylmuramic acid and N-acetyl-D-glucosamine residues in a peptidoglycan and between N-acetyl-D-glucosamine residues in chitodextrins.</text>
        <dbReference type="EC" id="3.2.1.17"/>
    </reaction>
</comment>
<comment type="activity regulation">
    <text evidence="3">Ca++ enhances the activity of the enzyme.</text>
</comment>
<comment type="biophysicochemical properties">
    <phDependence>
        <text evidence="3">Optimum pH is 5.5-6.0.</text>
    </phDependence>
</comment>
<comment type="domain">
    <text evidence="3 4">A CHAP domain is present at the N-terminus and is associated with the endopeptidase activity (PubMed:15256551). The CHAP domain is responsible for nearly all the cell lysis activity (PubMed:16820517). An Acm glycosidase domain is located in the central part of the protein and is associated with the muramidase activity (PubMed:15256551). The Acm domain seems to require the SH3b domain for activity (PubMed:16820517).</text>
</comment>
<comment type="similarity">
    <text evidence="7">Belongs to the glycosyl hydrolase 25 family.</text>
</comment>
<organismHost>
    <name type="scientific">Streptococcus agalactiae</name>
    <dbReference type="NCBI Taxonomy" id="1311"/>
</organismHost>
<name>LYS_BPB30</name>
<feature type="chain" id="PRO_0000448054" description="D-alanyl-L-alanine endopeptidase">
    <location>
        <begin position="1"/>
        <end position="443"/>
    </location>
</feature>
<feature type="domain" description="Peptidase C51" evidence="1">
    <location>
        <begin position="1"/>
        <end position="131"/>
    </location>
</feature>
<feature type="domain" description="SH3b" evidence="2">
    <location>
        <begin position="380"/>
        <end position="441"/>
    </location>
</feature>
<feature type="region of interest" description="Acm domain" evidence="3">
    <location>
        <begin position="145"/>
        <end position="344"/>
    </location>
</feature>
<feature type="active site" description="Nucleophile" evidence="8">
    <location>
        <position position="26"/>
    </location>
</feature>
<feature type="active site" description="Increases nucleophilicity of active site cys; for D-alanyl-L-alanine endopeptidase activity" evidence="8">
    <location>
        <position position="91"/>
    </location>
</feature>
<feature type="site" description="Important for 1,4-N-acetylmuramidase activity" evidence="3">
    <location>
        <position position="158"/>
    </location>
</feature>
<feature type="site" description="Important for 1,4-N-acetylmuramidase activity" evidence="3">
    <location>
        <position position="185"/>
    </location>
</feature>
<feature type="mutagenesis site" description="No effect on glycosidase activity; complete loss of endopeptidase activity." evidence="3">
    <original>C</original>
    <variation>S</variation>
    <location>
        <position position="26"/>
    </location>
</feature>
<feature type="mutagenesis site" description="Slight loss of glycosidase activity; 85% loss of endopeptidase activity." evidence="3">
    <original>C</original>
    <variation>S</variation>
    <location>
        <position position="34"/>
    </location>
</feature>
<feature type="mutagenesis site" description="30% loss of glycosidase activity; almost complete loss of endopeptidase activity." evidence="3">
    <original>C</original>
    <variation>S</variation>
    <location>
        <position position="44"/>
    </location>
</feature>
<feature type="mutagenesis site" description="40% loss of glycosidase activity; complete loss of endopeptidase activity." evidence="3">
    <original>H</original>
    <variation>A</variation>
    <location>
        <position position="91"/>
    </location>
</feature>
<feature type="mutagenesis site" description="Almost 90% loss of glycosidase activity; no effect on endopeptidase activity." evidence="3">
    <original>D</original>
    <variation>A</variation>
    <location>
        <position position="158"/>
    </location>
</feature>
<feature type="mutagenesis site" description="Major loss of glycosidase activity; no effect on endopeptidase activity." evidence="3">
    <original>E</original>
    <variation>A</variation>
    <location>
        <position position="185"/>
    </location>
</feature>
<organism>
    <name type="scientific">Streptococcus phage B30</name>
    <name type="common">Streptococcus agalactiae bacteriophage B30</name>
    <dbReference type="NCBI Taxonomy" id="209152"/>
    <lineage>
        <taxon>Viruses</taxon>
        <taxon>Duplodnaviria</taxon>
        <taxon>Heunggongvirae</taxon>
        <taxon>Uroviricota</taxon>
        <taxon>Caudoviricetes</taxon>
    </lineage>
</organism>
<protein>
    <recommendedName>
        <fullName evidence="6">D-alanyl-L-alanine endopeptidase</fullName>
        <ecNumber evidence="3 5">3.4.22.-</ecNumber>
    </recommendedName>
    <alternativeName>
        <fullName evidence="6">1,4-N-acetylmuramidase</fullName>
        <ecNumber evidence="5">3.2.1.17</ecNumber>
    </alternativeName>
    <alternativeName>
        <fullName evidence="6">B30 lysin</fullName>
    </alternativeName>
    <alternativeName>
        <fullName>Endoysin</fullName>
    </alternativeName>
    <alternativeName>
        <fullName>Glycosidase</fullName>
    </alternativeName>
</protein>